<accession>A1TYK3</accession>
<organism>
    <name type="scientific">Marinobacter nauticus (strain ATCC 700491 / DSM 11845 / VT8)</name>
    <name type="common">Marinobacter aquaeolei</name>
    <dbReference type="NCBI Taxonomy" id="351348"/>
    <lineage>
        <taxon>Bacteria</taxon>
        <taxon>Pseudomonadati</taxon>
        <taxon>Pseudomonadota</taxon>
        <taxon>Gammaproteobacteria</taxon>
        <taxon>Pseudomonadales</taxon>
        <taxon>Marinobacteraceae</taxon>
        <taxon>Marinobacter</taxon>
    </lineage>
</organism>
<reference key="1">
    <citation type="journal article" date="2011" name="Appl. Environ. Microbiol.">
        <title>Genomic potential of Marinobacter aquaeolei, a biogeochemical 'opportunitroph'.</title>
        <authorList>
            <person name="Singer E."/>
            <person name="Webb E.A."/>
            <person name="Nelson W.C."/>
            <person name="Heidelberg J.F."/>
            <person name="Ivanova N."/>
            <person name="Pati A."/>
            <person name="Edwards K.J."/>
        </authorList>
    </citation>
    <scope>NUCLEOTIDE SEQUENCE [LARGE SCALE GENOMIC DNA]</scope>
    <source>
        <strain>ATCC 700491 / DSM 11845 / VT8</strain>
    </source>
</reference>
<proteinExistence type="inferred from homology"/>
<dbReference type="EMBL" id="CP000514">
    <property type="protein sequence ID" value="ABM17822.1"/>
    <property type="molecule type" value="Genomic_DNA"/>
</dbReference>
<dbReference type="RefSeq" id="WP_011784249.1">
    <property type="nucleotide sequence ID" value="NC_008740.1"/>
</dbReference>
<dbReference type="SMR" id="A1TYK3"/>
<dbReference type="STRING" id="351348.Maqu_0725"/>
<dbReference type="GeneID" id="31820100"/>
<dbReference type="KEGG" id="maq:Maqu_0725"/>
<dbReference type="eggNOG" id="COG0092">
    <property type="taxonomic scope" value="Bacteria"/>
</dbReference>
<dbReference type="HOGENOM" id="CLU_058591_0_2_6"/>
<dbReference type="OrthoDB" id="9806396at2"/>
<dbReference type="Proteomes" id="UP000000998">
    <property type="component" value="Chromosome"/>
</dbReference>
<dbReference type="GO" id="GO:0022627">
    <property type="term" value="C:cytosolic small ribosomal subunit"/>
    <property type="evidence" value="ECO:0007669"/>
    <property type="project" value="TreeGrafter"/>
</dbReference>
<dbReference type="GO" id="GO:0003729">
    <property type="term" value="F:mRNA binding"/>
    <property type="evidence" value="ECO:0007669"/>
    <property type="project" value="UniProtKB-UniRule"/>
</dbReference>
<dbReference type="GO" id="GO:0019843">
    <property type="term" value="F:rRNA binding"/>
    <property type="evidence" value="ECO:0007669"/>
    <property type="project" value="UniProtKB-UniRule"/>
</dbReference>
<dbReference type="GO" id="GO:0003735">
    <property type="term" value="F:structural constituent of ribosome"/>
    <property type="evidence" value="ECO:0007669"/>
    <property type="project" value="InterPro"/>
</dbReference>
<dbReference type="GO" id="GO:0006412">
    <property type="term" value="P:translation"/>
    <property type="evidence" value="ECO:0007669"/>
    <property type="project" value="UniProtKB-UniRule"/>
</dbReference>
<dbReference type="CDD" id="cd02412">
    <property type="entry name" value="KH-II_30S_S3"/>
    <property type="match status" value="1"/>
</dbReference>
<dbReference type="FunFam" id="3.30.1140.32:FF:000001">
    <property type="entry name" value="30S ribosomal protein S3"/>
    <property type="match status" value="1"/>
</dbReference>
<dbReference type="FunFam" id="3.30.300.20:FF:000001">
    <property type="entry name" value="30S ribosomal protein S3"/>
    <property type="match status" value="1"/>
</dbReference>
<dbReference type="Gene3D" id="3.30.300.20">
    <property type="match status" value="1"/>
</dbReference>
<dbReference type="Gene3D" id="3.30.1140.32">
    <property type="entry name" value="Ribosomal protein S3, C-terminal domain"/>
    <property type="match status" value="1"/>
</dbReference>
<dbReference type="HAMAP" id="MF_01309_B">
    <property type="entry name" value="Ribosomal_uS3_B"/>
    <property type="match status" value="1"/>
</dbReference>
<dbReference type="InterPro" id="IPR004087">
    <property type="entry name" value="KH_dom"/>
</dbReference>
<dbReference type="InterPro" id="IPR015946">
    <property type="entry name" value="KH_dom-like_a/b"/>
</dbReference>
<dbReference type="InterPro" id="IPR004044">
    <property type="entry name" value="KH_dom_type_2"/>
</dbReference>
<dbReference type="InterPro" id="IPR009019">
    <property type="entry name" value="KH_sf_prok-type"/>
</dbReference>
<dbReference type="InterPro" id="IPR036419">
    <property type="entry name" value="Ribosomal_S3_C_sf"/>
</dbReference>
<dbReference type="InterPro" id="IPR005704">
    <property type="entry name" value="Ribosomal_uS3_bac-typ"/>
</dbReference>
<dbReference type="InterPro" id="IPR001351">
    <property type="entry name" value="Ribosomal_uS3_C"/>
</dbReference>
<dbReference type="InterPro" id="IPR018280">
    <property type="entry name" value="Ribosomal_uS3_CS"/>
</dbReference>
<dbReference type="NCBIfam" id="TIGR01009">
    <property type="entry name" value="rpsC_bact"/>
    <property type="match status" value="1"/>
</dbReference>
<dbReference type="PANTHER" id="PTHR11760">
    <property type="entry name" value="30S/40S RIBOSOMAL PROTEIN S3"/>
    <property type="match status" value="1"/>
</dbReference>
<dbReference type="PANTHER" id="PTHR11760:SF19">
    <property type="entry name" value="SMALL RIBOSOMAL SUBUNIT PROTEIN US3C"/>
    <property type="match status" value="1"/>
</dbReference>
<dbReference type="Pfam" id="PF07650">
    <property type="entry name" value="KH_2"/>
    <property type="match status" value="1"/>
</dbReference>
<dbReference type="Pfam" id="PF00189">
    <property type="entry name" value="Ribosomal_S3_C"/>
    <property type="match status" value="1"/>
</dbReference>
<dbReference type="SMART" id="SM00322">
    <property type="entry name" value="KH"/>
    <property type="match status" value="1"/>
</dbReference>
<dbReference type="SUPFAM" id="SSF54814">
    <property type="entry name" value="Prokaryotic type KH domain (KH-domain type II)"/>
    <property type="match status" value="1"/>
</dbReference>
<dbReference type="SUPFAM" id="SSF54821">
    <property type="entry name" value="Ribosomal protein S3 C-terminal domain"/>
    <property type="match status" value="1"/>
</dbReference>
<dbReference type="PROSITE" id="PS50823">
    <property type="entry name" value="KH_TYPE_2"/>
    <property type="match status" value="1"/>
</dbReference>
<dbReference type="PROSITE" id="PS00548">
    <property type="entry name" value="RIBOSOMAL_S3"/>
    <property type="match status" value="1"/>
</dbReference>
<name>RS3_MARN8</name>
<gene>
    <name evidence="1" type="primary">rpsC</name>
    <name type="ordered locus">Maqu_0725</name>
</gene>
<comment type="function">
    <text evidence="1">Binds the lower part of the 30S subunit head. Binds mRNA in the 70S ribosome, positioning it for translation.</text>
</comment>
<comment type="subunit">
    <text evidence="1">Part of the 30S ribosomal subunit. Forms a tight complex with proteins S10 and S14.</text>
</comment>
<comment type="similarity">
    <text evidence="1">Belongs to the universal ribosomal protein uS3 family.</text>
</comment>
<evidence type="ECO:0000255" key="1">
    <source>
        <dbReference type="HAMAP-Rule" id="MF_01309"/>
    </source>
</evidence>
<evidence type="ECO:0000305" key="2"/>
<feature type="chain" id="PRO_0000293822" description="Small ribosomal subunit protein uS3">
    <location>
        <begin position="1"/>
        <end position="227"/>
    </location>
</feature>
<feature type="domain" description="KH type-2" evidence="1">
    <location>
        <begin position="39"/>
        <end position="107"/>
    </location>
</feature>
<sequence length="227" mass="25514">MGHKVNPTGIRLGVIKEHNSVWYADKKDYAKNLLNDIQVREFLDKRLVKASVSKIVIERPAQNARITIHTARPGIVIGKKGEDVDRLRREVSDMMGVPVHINIEEVRKPDLDARLVAQNVAGQLERRVMFRRAMKRAVQNAMRQGAKGIKIQVGGRLGGAEIARSEWYREGRVPLHTLRADIDYATYEAHTTYGVIGVKVWIFKGEILGGMEQVRADKKASGKKGSK</sequence>
<protein>
    <recommendedName>
        <fullName evidence="1">Small ribosomal subunit protein uS3</fullName>
    </recommendedName>
    <alternativeName>
        <fullName evidence="2">30S ribosomal protein S3</fullName>
    </alternativeName>
</protein>
<keyword id="KW-0687">Ribonucleoprotein</keyword>
<keyword id="KW-0689">Ribosomal protein</keyword>
<keyword id="KW-0694">RNA-binding</keyword>
<keyword id="KW-0699">rRNA-binding</keyword>